<keyword id="KW-1185">Reference proteome</keyword>
<keyword id="KW-0678">Repressor</keyword>
<keyword id="KW-0346">Stress response</keyword>
<keyword id="KW-0804">Transcription</keyword>
<keyword id="KW-0805">Transcription regulation</keyword>
<comment type="function">
    <text evidence="1">Negative regulator of class I heat shock genes (grpE-dnaK-dnaJ and groELS operons). Prevents heat-shock induction of these operons.</text>
</comment>
<comment type="similarity">
    <text evidence="1">Belongs to the HrcA family.</text>
</comment>
<accession>A9NFN6</accession>
<proteinExistence type="inferred from homology"/>
<evidence type="ECO:0000255" key="1">
    <source>
        <dbReference type="HAMAP-Rule" id="MF_00081"/>
    </source>
</evidence>
<gene>
    <name evidence="1" type="primary">hrcA</name>
    <name type="ordered locus">ACL_0548</name>
</gene>
<organism>
    <name type="scientific">Acholeplasma laidlawii (strain PG-8A)</name>
    <dbReference type="NCBI Taxonomy" id="441768"/>
    <lineage>
        <taxon>Bacteria</taxon>
        <taxon>Bacillati</taxon>
        <taxon>Mycoplasmatota</taxon>
        <taxon>Mollicutes</taxon>
        <taxon>Acholeplasmatales</taxon>
        <taxon>Acholeplasmataceae</taxon>
        <taxon>Acholeplasma</taxon>
    </lineage>
</organism>
<dbReference type="EMBL" id="CP000896">
    <property type="protein sequence ID" value="ABX81166.1"/>
    <property type="molecule type" value="Genomic_DNA"/>
</dbReference>
<dbReference type="RefSeq" id="WP_012242497.1">
    <property type="nucleotide sequence ID" value="NC_010163.1"/>
</dbReference>
<dbReference type="SMR" id="A9NFN6"/>
<dbReference type="STRING" id="441768.ACL_0548"/>
<dbReference type="GeneID" id="41338726"/>
<dbReference type="KEGG" id="acl:ACL_0548"/>
<dbReference type="eggNOG" id="COG1420">
    <property type="taxonomic scope" value="Bacteria"/>
</dbReference>
<dbReference type="HOGENOM" id="CLU_050019_1_0_14"/>
<dbReference type="OrthoDB" id="9783139at2"/>
<dbReference type="Proteomes" id="UP000008558">
    <property type="component" value="Chromosome"/>
</dbReference>
<dbReference type="GO" id="GO:0003677">
    <property type="term" value="F:DNA binding"/>
    <property type="evidence" value="ECO:0007669"/>
    <property type="project" value="InterPro"/>
</dbReference>
<dbReference type="GO" id="GO:0045892">
    <property type="term" value="P:negative regulation of DNA-templated transcription"/>
    <property type="evidence" value="ECO:0007669"/>
    <property type="project" value="UniProtKB-UniRule"/>
</dbReference>
<dbReference type="Gene3D" id="3.30.450.40">
    <property type="match status" value="1"/>
</dbReference>
<dbReference type="Gene3D" id="3.30.390.60">
    <property type="entry name" value="Heat-inducible transcription repressor hrca homolog, domain 3"/>
    <property type="match status" value="1"/>
</dbReference>
<dbReference type="Gene3D" id="1.10.10.10">
    <property type="entry name" value="Winged helix-like DNA-binding domain superfamily/Winged helix DNA-binding domain"/>
    <property type="match status" value="1"/>
</dbReference>
<dbReference type="HAMAP" id="MF_00081">
    <property type="entry name" value="HrcA"/>
    <property type="match status" value="1"/>
</dbReference>
<dbReference type="InterPro" id="IPR029016">
    <property type="entry name" value="GAF-like_dom_sf"/>
</dbReference>
<dbReference type="InterPro" id="IPR002571">
    <property type="entry name" value="HrcA"/>
</dbReference>
<dbReference type="InterPro" id="IPR021153">
    <property type="entry name" value="HrcA_C"/>
</dbReference>
<dbReference type="InterPro" id="IPR036388">
    <property type="entry name" value="WH-like_DNA-bd_sf"/>
</dbReference>
<dbReference type="InterPro" id="IPR036390">
    <property type="entry name" value="WH_DNA-bd_sf"/>
</dbReference>
<dbReference type="InterPro" id="IPR023120">
    <property type="entry name" value="WHTH_transcript_rep_HrcA_IDD"/>
</dbReference>
<dbReference type="NCBIfam" id="TIGR00331">
    <property type="entry name" value="hrcA"/>
    <property type="match status" value="1"/>
</dbReference>
<dbReference type="PANTHER" id="PTHR34824">
    <property type="entry name" value="HEAT-INDUCIBLE TRANSCRIPTION REPRESSOR HRCA"/>
    <property type="match status" value="1"/>
</dbReference>
<dbReference type="PANTHER" id="PTHR34824:SF1">
    <property type="entry name" value="HEAT-INDUCIBLE TRANSCRIPTION REPRESSOR HRCA"/>
    <property type="match status" value="1"/>
</dbReference>
<dbReference type="Pfam" id="PF01628">
    <property type="entry name" value="HrcA"/>
    <property type="match status" value="1"/>
</dbReference>
<dbReference type="PIRSF" id="PIRSF005485">
    <property type="entry name" value="HrcA"/>
    <property type="match status" value="1"/>
</dbReference>
<dbReference type="SUPFAM" id="SSF55781">
    <property type="entry name" value="GAF domain-like"/>
    <property type="match status" value="1"/>
</dbReference>
<dbReference type="SUPFAM" id="SSF46785">
    <property type="entry name" value="Winged helix' DNA-binding domain"/>
    <property type="match status" value="1"/>
</dbReference>
<sequence>MISSRQKLILKAIIDMYSEKGEPVGSKALMALPYLNYSSATLRYDMAVLEELGFLEKMHTSSGRVPSERGYRYYIEHLVTRDNDVTEVFPLIDEVFSKKALGREHTIKEALKLLTDLTSYTAVAVGPDILQSHIKRIEMVPLGLKDAVMLIVTDTGHVQHQQIHISDDMRMDDIKEVIHTLDDLLKNRTLEDALKVLKEEYAISELNQFMSYQSQIIDSFIEAFSKFASDSFYLSGMTNAFEQPEFNDVSHMKRFIDMMDRREIVKLIGTAEGISVRFGSDMEIKPLNQMTIISIPYQIDSKQKGTIALVGPSRMSYQKVIPLLEYIAANLAKLYKDNNKET</sequence>
<protein>
    <recommendedName>
        <fullName evidence="1">Heat-inducible transcription repressor HrcA</fullName>
    </recommendedName>
</protein>
<feature type="chain" id="PRO_1000075278" description="Heat-inducible transcription repressor HrcA">
    <location>
        <begin position="1"/>
        <end position="342"/>
    </location>
</feature>
<reference key="1">
    <citation type="journal article" date="2011" name="J. Bacteriol.">
        <title>Complete genome and proteome of Acholeplasma laidlawii.</title>
        <authorList>
            <person name="Lazarev V.N."/>
            <person name="Levitskii S.A."/>
            <person name="Basovskii Y.I."/>
            <person name="Chukin M.M."/>
            <person name="Akopian T.A."/>
            <person name="Vereshchagin V.V."/>
            <person name="Kostrjukova E.S."/>
            <person name="Kovaleva G.Y."/>
            <person name="Kazanov M.D."/>
            <person name="Malko D.B."/>
            <person name="Vitreschak A.G."/>
            <person name="Sernova N.V."/>
            <person name="Gelfand M.S."/>
            <person name="Demina I.A."/>
            <person name="Serebryakova M.V."/>
            <person name="Galyamina M.A."/>
            <person name="Vtyurin N.N."/>
            <person name="Rogov S.I."/>
            <person name="Alexeev D.G."/>
            <person name="Ladygina V.G."/>
            <person name="Govorun V.M."/>
        </authorList>
    </citation>
    <scope>NUCLEOTIDE SEQUENCE [LARGE SCALE GENOMIC DNA]</scope>
    <source>
        <strain>PG-8A</strain>
    </source>
</reference>
<name>HRCA_ACHLI</name>